<name>AZOR2_BACSU</name>
<comment type="function">
    <text evidence="2 3 4 7">Quinone reductase that provides resistance to thiol-specific stress caused by electrophilic quinones (Probable). Contributes to resistance to 2-methylhydroquinone (2-MHQ) and catechol (PubMed:17725564, PubMed:18208493). Exhibits NADH-dependent 2,6-dichloroindophenol (DCIP) oxidoreductase activity (PubMed:17284825).</text>
</comment>
<comment type="function">
    <text evidence="2">Also exhibits azoreductase activity. Catalyzes the reductive cleavage of the azo bond in aromatic azo compounds to the corresponding amines (PubMed:17284825). Can reduce methyl red (PubMed:17284825).</text>
</comment>
<comment type="catalytic activity">
    <reaction evidence="1">
        <text>2 a quinone + NADH + H(+) = 2 a 1,4-benzosemiquinone + NAD(+)</text>
        <dbReference type="Rhea" id="RHEA:65952"/>
        <dbReference type="ChEBI" id="CHEBI:15378"/>
        <dbReference type="ChEBI" id="CHEBI:57540"/>
        <dbReference type="ChEBI" id="CHEBI:57945"/>
        <dbReference type="ChEBI" id="CHEBI:132124"/>
        <dbReference type="ChEBI" id="CHEBI:134225"/>
    </reaction>
</comment>
<comment type="catalytic activity">
    <reaction evidence="1 2">
        <text>N,N-dimethyl-1,4-phenylenediamine + anthranilate + 2 NAD(+) = 2-(4-dimethylaminophenyl)diazenylbenzoate + 2 NADH + 2 H(+)</text>
        <dbReference type="Rhea" id="RHEA:55872"/>
        <dbReference type="ChEBI" id="CHEBI:15378"/>
        <dbReference type="ChEBI" id="CHEBI:15783"/>
        <dbReference type="ChEBI" id="CHEBI:16567"/>
        <dbReference type="ChEBI" id="CHEBI:57540"/>
        <dbReference type="ChEBI" id="CHEBI:57945"/>
        <dbReference type="ChEBI" id="CHEBI:71579"/>
        <dbReference type="EC" id="1.7.1.17"/>
    </reaction>
    <physiologicalReaction direction="right-to-left" evidence="2">
        <dbReference type="Rhea" id="RHEA:55874"/>
    </physiologicalReaction>
</comment>
<comment type="cofactor">
    <cofactor evidence="1 2">
        <name>FMN</name>
        <dbReference type="ChEBI" id="CHEBI:58210"/>
    </cofactor>
    <text evidence="1 2">Binds 1 FMN per subunit.</text>
</comment>
<comment type="activity regulation">
    <text evidence="2">Strongly inhibited by Pb(2+) and weakly inhibited by Cu(2+), Hg(2+) and Fe(2+). Stable in presence of Ag(+).</text>
</comment>
<comment type="biophysicochemical properties">
    <kinetics>
        <KM evidence="2">8 uM for 2,6-dichloroondophenol (DCIP) (at pH 7.5 and at 25 degrees Celsius)</KM>
        <KM evidence="2">190 uM for NADH (at pH 7.5 and at 25 degrees Celsius)</KM>
    </kinetics>
    <phDependence>
        <text evidence="2">Optimum pH is 7.5.</text>
    </phDependence>
    <temperatureDependence>
        <text evidence="2">Activity increases linearly up to 40 degrees Celsius. Stable up to 55 degrees Celsius after incubation for 30 minutes at pH 7.5. During incubation at 25 degrees Celsius for 16h, the enzyme is stable between pH 5.5 and 9.0, where 80% activity is observed.</text>
    </temperatureDependence>
</comment>
<comment type="subunit">
    <text evidence="1 2">Homodimer.</text>
</comment>
<comment type="induction">
    <text evidence="3">Repressed by MhqR. Induced by thiol specific stress conditions, such as exposure to 2-methylhydroquinone (2-MHQ), catechol or diamide. Not induced by oxidative stress due to hydrogen peroxide or methylglyoxal.</text>
</comment>
<comment type="disruption phenotype">
    <text evidence="3">Deletion mutant is sensitive to 2-MHQ and catechol.</text>
</comment>
<comment type="similarity">
    <text evidence="1 6">Belongs to the azoreductase type 1 family.</text>
</comment>
<reference key="1">
    <citation type="journal article" date="1997" name="Nature">
        <title>The complete genome sequence of the Gram-positive bacterium Bacillus subtilis.</title>
        <authorList>
            <person name="Kunst F."/>
            <person name="Ogasawara N."/>
            <person name="Moszer I."/>
            <person name="Albertini A.M."/>
            <person name="Alloni G."/>
            <person name="Azevedo V."/>
            <person name="Bertero M.G."/>
            <person name="Bessieres P."/>
            <person name="Bolotin A."/>
            <person name="Borchert S."/>
            <person name="Borriss R."/>
            <person name="Boursier L."/>
            <person name="Brans A."/>
            <person name="Braun M."/>
            <person name="Brignell S.C."/>
            <person name="Bron S."/>
            <person name="Brouillet S."/>
            <person name="Bruschi C.V."/>
            <person name="Caldwell B."/>
            <person name="Capuano V."/>
            <person name="Carter N.M."/>
            <person name="Choi S.-K."/>
            <person name="Codani J.-J."/>
            <person name="Connerton I.F."/>
            <person name="Cummings N.J."/>
            <person name="Daniel R.A."/>
            <person name="Denizot F."/>
            <person name="Devine K.M."/>
            <person name="Duesterhoeft A."/>
            <person name="Ehrlich S.D."/>
            <person name="Emmerson P.T."/>
            <person name="Entian K.-D."/>
            <person name="Errington J."/>
            <person name="Fabret C."/>
            <person name="Ferrari E."/>
            <person name="Foulger D."/>
            <person name="Fritz C."/>
            <person name="Fujita M."/>
            <person name="Fujita Y."/>
            <person name="Fuma S."/>
            <person name="Galizzi A."/>
            <person name="Galleron N."/>
            <person name="Ghim S.-Y."/>
            <person name="Glaser P."/>
            <person name="Goffeau A."/>
            <person name="Golightly E.J."/>
            <person name="Grandi G."/>
            <person name="Guiseppi G."/>
            <person name="Guy B.J."/>
            <person name="Haga K."/>
            <person name="Haiech J."/>
            <person name="Harwood C.R."/>
            <person name="Henaut A."/>
            <person name="Hilbert H."/>
            <person name="Holsappel S."/>
            <person name="Hosono S."/>
            <person name="Hullo M.-F."/>
            <person name="Itaya M."/>
            <person name="Jones L.-M."/>
            <person name="Joris B."/>
            <person name="Karamata D."/>
            <person name="Kasahara Y."/>
            <person name="Klaerr-Blanchard M."/>
            <person name="Klein C."/>
            <person name="Kobayashi Y."/>
            <person name="Koetter P."/>
            <person name="Koningstein G."/>
            <person name="Krogh S."/>
            <person name="Kumano M."/>
            <person name="Kurita K."/>
            <person name="Lapidus A."/>
            <person name="Lardinois S."/>
            <person name="Lauber J."/>
            <person name="Lazarevic V."/>
            <person name="Lee S.-M."/>
            <person name="Levine A."/>
            <person name="Liu H."/>
            <person name="Masuda S."/>
            <person name="Mauel C."/>
            <person name="Medigue C."/>
            <person name="Medina N."/>
            <person name="Mellado R.P."/>
            <person name="Mizuno M."/>
            <person name="Moestl D."/>
            <person name="Nakai S."/>
            <person name="Noback M."/>
            <person name="Noone D."/>
            <person name="O'Reilly M."/>
            <person name="Ogawa K."/>
            <person name="Ogiwara A."/>
            <person name="Oudega B."/>
            <person name="Park S.-H."/>
            <person name="Parro V."/>
            <person name="Pohl T.M."/>
            <person name="Portetelle D."/>
            <person name="Porwollik S."/>
            <person name="Prescott A.M."/>
            <person name="Presecan E."/>
            <person name="Pujic P."/>
            <person name="Purnelle B."/>
            <person name="Rapoport G."/>
            <person name="Rey M."/>
            <person name="Reynolds S."/>
            <person name="Rieger M."/>
            <person name="Rivolta C."/>
            <person name="Rocha E."/>
            <person name="Roche B."/>
            <person name="Rose M."/>
            <person name="Sadaie Y."/>
            <person name="Sato T."/>
            <person name="Scanlan E."/>
            <person name="Schleich S."/>
            <person name="Schroeter R."/>
            <person name="Scoffone F."/>
            <person name="Sekiguchi J."/>
            <person name="Sekowska A."/>
            <person name="Seror S.J."/>
            <person name="Serror P."/>
            <person name="Shin B.-S."/>
            <person name="Soldo B."/>
            <person name="Sorokin A."/>
            <person name="Tacconi E."/>
            <person name="Takagi T."/>
            <person name="Takahashi H."/>
            <person name="Takemaru K."/>
            <person name="Takeuchi M."/>
            <person name="Tamakoshi A."/>
            <person name="Tanaka T."/>
            <person name="Terpstra P."/>
            <person name="Tognoni A."/>
            <person name="Tosato V."/>
            <person name="Uchiyama S."/>
            <person name="Vandenbol M."/>
            <person name="Vannier F."/>
            <person name="Vassarotti A."/>
            <person name="Viari A."/>
            <person name="Wambutt R."/>
            <person name="Wedler E."/>
            <person name="Wedler H."/>
            <person name="Weitzenegger T."/>
            <person name="Winters P."/>
            <person name="Wipat A."/>
            <person name="Yamamoto H."/>
            <person name="Yamane K."/>
            <person name="Yasumoto K."/>
            <person name="Yata K."/>
            <person name="Yoshida K."/>
            <person name="Yoshikawa H.-F."/>
            <person name="Zumstein E."/>
            <person name="Yoshikawa H."/>
            <person name="Danchin A."/>
        </authorList>
    </citation>
    <scope>NUCLEOTIDE SEQUENCE [LARGE SCALE GENOMIC DNA]</scope>
    <source>
        <strain>168</strain>
    </source>
</reference>
<reference key="2">
    <citation type="journal article" date="2007" name="Biosci. Biotechnol. Biochem.">
        <title>Characterization of a NADH:dichloroindophenol oxidoreductase from Bacillus subtilis.</title>
        <authorList>
            <person name="Nishiya Y."/>
            <person name="Yamamoto Y."/>
        </authorList>
    </citation>
    <scope>PROTEIN SEQUENCE OF 2-6</scope>
    <scope>FUNCTION</scope>
    <scope>CATALYTIC ACTIVITY</scope>
    <scope>COFACTOR</scope>
    <scope>BIOPHYSICOCHEMICAL PROPERTIES</scope>
    <scope>ACTIVITY REGULATION</scope>
    <scope>SUBUNIT</scope>
    <source>
        <strain>168</strain>
    </source>
</reference>
<reference key="3">
    <citation type="journal article" date="2007" name="Mol. Microbiol.">
        <title>The MarR-type repressor MhqR (YkvE) regulates multiple dioxygenases/glyoxalases and an azoreductase which confer resistance to 2-methylhydroquinone and catechol in Bacillus subtilis.</title>
        <authorList>
            <person name="Toewe S."/>
            <person name="Leelakriangsak M."/>
            <person name="Kobayashi K."/>
            <person name="Van Duy N."/>
            <person name="Hecker M."/>
            <person name="Zuber P."/>
            <person name="Antelmann H."/>
        </authorList>
    </citation>
    <scope>FUNCTION</scope>
    <scope>INDUCTION</scope>
    <scope>DISRUPTION PHENOTYPE</scope>
    <source>
        <strain>168</strain>
    </source>
</reference>
<reference key="4">
    <citation type="journal article" date="2008" name="Mol. Microbiol.">
        <title>Regulation of quinone detoxification by the thiol stress sensing DUF24/MarR-like repressor, YodB in Bacillus subtilis.</title>
        <authorList>
            <person name="Leelakriangsak M."/>
            <person name="Huyen N.T.T."/>
            <person name="Toewe S."/>
            <person name="van Duy N."/>
            <person name="Becher D."/>
            <person name="Hecker M."/>
            <person name="Antelmann H."/>
            <person name="Zuber P."/>
        </authorList>
    </citation>
    <scope>FUNCTION</scope>
    <source>
        <strain>168</strain>
    </source>
</reference>
<feature type="initiator methionine" description="Removed" evidence="2">
    <location>
        <position position="1"/>
    </location>
</feature>
<feature type="chain" id="PRO_0000166329" description="FMN-dependent NADH:quinone oxidoreductase 2">
    <location>
        <begin position="2"/>
        <end position="211"/>
    </location>
</feature>
<feature type="binding site" evidence="1">
    <location>
        <begin position="17"/>
        <end position="19"/>
    </location>
    <ligand>
        <name>FMN</name>
        <dbReference type="ChEBI" id="CHEBI:58210"/>
    </ligand>
</feature>
<evidence type="ECO:0000255" key="1">
    <source>
        <dbReference type="HAMAP-Rule" id="MF_01216"/>
    </source>
</evidence>
<evidence type="ECO:0000269" key="2">
    <source>
    </source>
</evidence>
<evidence type="ECO:0000269" key="3">
    <source>
    </source>
</evidence>
<evidence type="ECO:0000269" key="4">
    <source>
    </source>
</evidence>
<evidence type="ECO:0000303" key="5">
    <source>
    </source>
</evidence>
<evidence type="ECO:0000305" key="6"/>
<evidence type="ECO:0000305" key="7">
    <source>
    </source>
</evidence>
<keyword id="KW-0058">Aromatic hydrocarbons catabolism</keyword>
<keyword id="KW-0216">Detoxification</keyword>
<keyword id="KW-0903">Direct protein sequencing</keyword>
<keyword id="KW-0285">Flavoprotein</keyword>
<keyword id="KW-0288">FMN</keyword>
<keyword id="KW-0520">NAD</keyword>
<keyword id="KW-0560">Oxidoreductase</keyword>
<keyword id="KW-1185">Reference proteome</keyword>
<proteinExistence type="evidence at protein level"/>
<gene>
    <name evidence="1 5" type="primary">azoR2</name>
    <name type="synonym">yvaB</name>
    <name type="ordered locus">BSU33540</name>
</gene>
<dbReference type="EC" id="1.6.5.-" evidence="1"/>
<dbReference type="EC" id="1.7.1.17" evidence="1 2"/>
<dbReference type="EMBL" id="AL009126">
    <property type="protein sequence ID" value="CAB15359.1"/>
    <property type="molecule type" value="Genomic_DNA"/>
</dbReference>
<dbReference type="PIR" id="H70026">
    <property type="entry name" value="H70026"/>
</dbReference>
<dbReference type="RefSeq" id="WP_003243587.1">
    <property type="nucleotide sequence ID" value="NZ_OZ025638.1"/>
</dbReference>
<dbReference type="SMR" id="O32224"/>
<dbReference type="FunCoup" id="O32224">
    <property type="interactions" value="40"/>
</dbReference>
<dbReference type="STRING" id="224308.BSU33540"/>
<dbReference type="jPOST" id="O32224"/>
<dbReference type="PaxDb" id="224308-BSU33540"/>
<dbReference type="EnsemblBacteria" id="CAB15359">
    <property type="protein sequence ID" value="CAB15359"/>
    <property type="gene ID" value="BSU_33540"/>
</dbReference>
<dbReference type="GeneID" id="936142"/>
<dbReference type="KEGG" id="bsu:BSU33540"/>
<dbReference type="PATRIC" id="fig|224308.179.peg.3639"/>
<dbReference type="eggNOG" id="COG1182">
    <property type="taxonomic scope" value="Bacteria"/>
</dbReference>
<dbReference type="InParanoid" id="O32224"/>
<dbReference type="OrthoDB" id="9805013at2"/>
<dbReference type="PhylomeDB" id="O32224"/>
<dbReference type="BioCyc" id="BSUB:BSU33540-MONOMER"/>
<dbReference type="SABIO-RK" id="O32224"/>
<dbReference type="Proteomes" id="UP000001570">
    <property type="component" value="Chromosome"/>
</dbReference>
<dbReference type="GO" id="GO:0009055">
    <property type="term" value="F:electron transfer activity"/>
    <property type="evidence" value="ECO:0007669"/>
    <property type="project" value="UniProtKB-UniRule"/>
</dbReference>
<dbReference type="GO" id="GO:0010181">
    <property type="term" value="F:FMN binding"/>
    <property type="evidence" value="ECO:0007669"/>
    <property type="project" value="UniProtKB-UniRule"/>
</dbReference>
<dbReference type="GO" id="GO:0016652">
    <property type="term" value="F:oxidoreductase activity, acting on NAD(P)H as acceptor"/>
    <property type="evidence" value="ECO:0007669"/>
    <property type="project" value="UniProtKB-UniRule"/>
</dbReference>
<dbReference type="GO" id="GO:0016655">
    <property type="term" value="F:oxidoreductase activity, acting on NAD(P)H, quinone or similar compound as acceptor"/>
    <property type="evidence" value="ECO:0007669"/>
    <property type="project" value="InterPro"/>
</dbReference>
<dbReference type="GO" id="GO:0009056">
    <property type="term" value="P:catabolic process"/>
    <property type="evidence" value="ECO:0007669"/>
    <property type="project" value="UniProtKB-KW"/>
</dbReference>
<dbReference type="GO" id="GO:0009636">
    <property type="term" value="P:response to toxic substance"/>
    <property type="evidence" value="ECO:0007669"/>
    <property type="project" value="UniProtKB-KW"/>
</dbReference>
<dbReference type="Gene3D" id="3.40.50.360">
    <property type="match status" value="1"/>
</dbReference>
<dbReference type="HAMAP" id="MF_01216">
    <property type="entry name" value="Azoreductase_type1"/>
    <property type="match status" value="1"/>
</dbReference>
<dbReference type="InterPro" id="IPR003680">
    <property type="entry name" value="Flavodoxin_fold"/>
</dbReference>
<dbReference type="InterPro" id="IPR029039">
    <property type="entry name" value="Flavoprotein-like_sf"/>
</dbReference>
<dbReference type="InterPro" id="IPR050104">
    <property type="entry name" value="FMN-dep_NADH:Q_OxRdtase_AzoR1"/>
</dbReference>
<dbReference type="InterPro" id="IPR023048">
    <property type="entry name" value="NADH:quinone_OxRdtase_FMN_depd"/>
</dbReference>
<dbReference type="NCBIfam" id="NF010075">
    <property type="entry name" value="PRK13556.1"/>
    <property type="match status" value="1"/>
</dbReference>
<dbReference type="PANTHER" id="PTHR43741">
    <property type="entry name" value="FMN-DEPENDENT NADH-AZOREDUCTASE 1"/>
    <property type="match status" value="1"/>
</dbReference>
<dbReference type="PANTHER" id="PTHR43741:SF7">
    <property type="entry name" value="FMN-DEPENDENT NADH:QUINONE OXIDOREDUCTASE"/>
    <property type="match status" value="1"/>
</dbReference>
<dbReference type="Pfam" id="PF02525">
    <property type="entry name" value="Flavodoxin_2"/>
    <property type="match status" value="1"/>
</dbReference>
<dbReference type="SUPFAM" id="SSF52218">
    <property type="entry name" value="Flavoproteins"/>
    <property type="match status" value="1"/>
</dbReference>
<organism>
    <name type="scientific">Bacillus subtilis (strain 168)</name>
    <dbReference type="NCBI Taxonomy" id="224308"/>
    <lineage>
        <taxon>Bacteria</taxon>
        <taxon>Bacillati</taxon>
        <taxon>Bacillota</taxon>
        <taxon>Bacilli</taxon>
        <taxon>Bacillales</taxon>
        <taxon>Bacillaceae</taxon>
        <taxon>Bacillus</taxon>
    </lineage>
</organism>
<sequence length="211" mass="23272">MAKVLYITAHPHDEATSYSMATGKAFIESYKEANPNDEVVHIDLYKENIPHIDADVFSGWGKLQSGTGFEELSESEKAKVGRLGELSDQFASADKYVFVTPLWNFSFPPVMKAYLDSVAVAGKSFKYTEQGPVGLLTDKKAIHIQARGGYYSEGPAAEMEMGHRYIGIMMNFFGVPSFDGIFVEGHNAEPDKAQQIKEDAIARAKEAGKTF</sequence>
<protein>
    <recommendedName>
        <fullName evidence="1 6">FMN-dependent NADH:quinone oxidoreductase 2</fullName>
        <ecNumber evidence="1">1.6.5.-</ecNumber>
    </recommendedName>
    <alternativeName>
        <fullName evidence="1">Azo-dye reductase 2</fullName>
    </alternativeName>
    <alternativeName>
        <fullName evidence="1">FMN-dependent NADH-azo compound oxidoreductase 2</fullName>
    </alternativeName>
    <alternativeName>
        <fullName evidence="1">FMN-dependent NADH-azoreductase 2</fullName>
        <ecNumber evidence="1 2">1.7.1.17</ecNumber>
    </alternativeName>
</protein>
<accession>O32224</accession>